<comment type="function">
    <text evidence="1">Involved in the de novo purine biosynthesis. Catalyzes the transfer of formate to 5-phospho-ribosyl-glycinamide (GAR), producing 5-phospho-ribosyl-N-formylglycinamide (FGAR). Formate is provided by PurU via hydrolysis of 10-formyl-tetrahydrofolate.</text>
</comment>
<comment type="catalytic activity">
    <reaction evidence="1">
        <text>N(1)-(5-phospho-beta-D-ribosyl)glycinamide + formate + ATP = N(2)-formyl-N(1)-(5-phospho-beta-D-ribosyl)glycinamide + ADP + phosphate + H(+)</text>
        <dbReference type="Rhea" id="RHEA:24829"/>
        <dbReference type="ChEBI" id="CHEBI:15378"/>
        <dbReference type="ChEBI" id="CHEBI:15740"/>
        <dbReference type="ChEBI" id="CHEBI:30616"/>
        <dbReference type="ChEBI" id="CHEBI:43474"/>
        <dbReference type="ChEBI" id="CHEBI:143788"/>
        <dbReference type="ChEBI" id="CHEBI:147286"/>
        <dbReference type="ChEBI" id="CHEBI:456216"/>
        <dbReference type="EC" id="6.3.1.21"/>
    </reaction>
    <physiologicalReaction direction="left-to-right" evidence="1">
        <dbReference type="Rhea" id="RHEA:24830"/>
    </physiologicalReaction>
</comment>
<comment type="pathway">
    <text evidence="1">Purine metabolism; IMP biosynthesis via de novo pathway; N(2)-formyl-N(1)-(5-phospho-D-ribosyl)glycinamide from N(1)-(5-phospho-D-ribosyl)glycinamide (formate route): step 1/1.</text>
</comment>
<comment type="subunit">
    <text evidence="1">Homodimer.</text>
</comment>
<comment type="similarity">
    <text evidence="1">Belongs to the PurK/PurT family.</text>
</comment>
<organism>
    <name type="scientific">Syntrophotalea carbinolica (strain DSM 2380 / NBRC 103641 / GraBd1)</name>
    <name type="common">Pelobacter carbinolicus</name>
    <dbReference type="NCBI Taxonomy" id="338963"/>
    <lineage>
        <taxon>Bacteria</taxon>
        <taxon>Pseudomonadati</taxon>
        <taxon>Thermodesulfobacteriota</taxon>
        <taxon>Desulfuromonadia</taxon>
        <taxon>Desulfuromonadales</taxon>
        <taxon>Syntrophotaleaceae</taxon>
        <taxon>Syntrophotalea</taxon>
    </lineage>
</organism>
<evidence type="ECO:0000255" key="1">
    <source>
        <dbReference type="HAMAP-Rule" id="MF_01643"/>
    </source>
</evidence>
<name>PURT_SYNC1</name>
<proteinExistence type="inferred from homology"/>
<keyword id="KW-0067">ATP-binding</keyword>
<keyword id="KW-0436">Ligase</keyword>
<keyword id="KW-0460">Magnesium</keyword>
<keyword id="KW-0479">Metal-binding</keyword>
<keyword id="KW-0547">Nucleotide-binding</keyword>
<keyword id="KW-0658">Purine biosynthesis</keyword>
<keyword id="KW-1185">Reference proteome</keyword>
<sequence>MIGTPLKKSATKLMMLGCGELGKEVVIEAQRFGIETIAVDRYADAPAMQVAHRSHVANMLDRDALERIIKQESPDLIVPEIEAINTTFLLELEQQGFRIIPTARATNLTMNREGIRRLAAEDLNLPTAAYRFASSYEEFCQAVEEIGLPCVIKPIMSSSGKGQSTVKTPDDIEKAWNYARQGARGAGERVIIEAFIPFDYEITLLTVRHVDGTSYCPPIGHRQEGGDYQESWQPMPMTDKALAEAQRQAKVITEALGGAGLFGVEFFIQGDTVYFSEVSPRPHDTGMVTMATQNMSEFELHVRAVLGLPIPAIELLSPGASHVVLAGGQDDEVSFSGVEDALRVPGSKVRLFGKPDSRPGRRMGVALVVAPDVDTARKRAEEAAGKIRVEPVK</sequence>
<dbReference type="EC" id="6.3.1.21" evidence="1"/>
<dbReference type="EMBL" id="CP000142">
    <property type="protein sequence ID" value="ABA88303.1"/>
    <property type="molecule type" value="Genomic_DNA"/>
</dbReference>
<dbReference type="RefSeq" id="WP_011340772.1">
    <property type="nucleotide sequence ID" value="NC_007498.2"/>
</dbReference>
<dbReference type="SMR" id="Q3A5Q4"/>
<dbReference type="STRING" id="338963.Pcar_1053"/>
<dbReference type="KEGG" id="pca:Pcar_1053"/>
<dbReference type="eggNOG" id="COG0027">
    <property type="taxonomic scope" value="Bacteria"/>
</dbReference>
<dbReference type="HOGENOM" id="CLU_011534_1_3_7"/>
<dbReference type="OrthoDB" id="9804625at2"/>
<dbReference type="UniPathway" id="UPA00074">
    <property type="reaction ID" value="UER00127"/>
</dbReference>
<dbReference type="Proteomes" id="UP000002534">
    <property type="component" value="Chromosome"/>
</dbReference>
<dbReference type="GO" id="GO:0005829">
    <property type="term" value="C:cytosol"/>
    <property type="evidence" value="ECO:0007669"/>
    <property type="project" value="TreeGrafter"/>
</dbReference>
<dbReference type="GO" id="GO:0005524">
    <property type="term" value="F:ATP binding"/>
    <property type="evidence" value="ECO:0007669"/>
    <property type="project" value="UniProtKB-UniRule"/>
</dbReference>
<dbReference type="GO" id="GO:0000287">
    <property type="term" value="F:magnesium ion binding"/>
    <property type="evidence" value="ECO:0007669"/>
    <property type="project" value="InterPro"/>
</dbReference>
<dbReference type="GO" id="GO:0043815">
    <property type="term" value="F:phosphoribosylglycinamide formyltransferase 2 activity"/>
    <property type="evidence" value="ECO:0007669"/>
    <property type="project" value="UniProtKB-UniRule"/>
</dbReference>
<dbReference type="GO" id="GO:0004644">
    <property type="term" value="F:phosphoribosylglycinamide formyltransferase activity"/>
    <property type="evidence" value="ECO:0007669"/>
    <property type="project" value="InterPro"/>
</dbReference>
<dbReference type="GO" id="GO:0006189">
    <property type="term" value="P:'de novo' IMP biosynthetic process"/>
    <property type="evidence" value="ECO:0007669"/>
    <property type="project" value="UniProtKB-UniRule"/>
</dbReference>
<dbReference type="FunFam" id="3.30.1490.20:FF:000013">
    <property type="entry name" value="Formate-dependent phosphoribosylglycinamide formyltransferase"/>
    <property type="match status" value="1"/>
</dbReference>
<dbReference type="FunFam" id="3.40.50.20:FF:000007">
    <property type="entry name" value="Formate-dependent phosphoribosylglycinamide formyltransferase"/>
    <property type="match status" value="1"/>
</dbReference>
<dbReference type="Gene3D" id="3.40.50.20">
    <property type="match status" value="1"/>
</dbReference>
<dbReference type="Gene3D" id="3.30.1490.20">
    <property type="entry name" value="ATP-grasp fold, A domain"/>
    <property type="match status" value="1"/>
</dbReference>
<dbReference type="Gene3D" id="3.30.470.20">
    <property type="entry name" value="ATP-grasp fold, B domain"/>
    <property type="match status" value="1"/>
</dbReference>
<dbReference type="HAMAP" id="MF_01643">
    <property type="entry name" value="PurT"/>
    <property type="match status" value="1"/>
</dbReference>
<dbReference type="InterPro" id="IPR011761">
    <property type="entry name" value="ATP-grasp"/>
</dbReference>
<dbReference type="InterPro" id="IPR003135">
    <property type="entry name" value="ATP-grasp_carboxylate-amine"/>
</dbReference>
<dbReference type="InterPro" id="IPR013815">
    <property type="entry name" value="ATP_grasp_subdomain_1"/>
</dbReference>
<dbReference type="InterPro" id="IPR016185">
    <property type="entry name" value="PreATP-grasp_dom_sf"/>
</dbReference>
<dbReference type="InterPro" id="IPR005862">
    <property type="entry name" value="PurT"/>
</dbReference>
<dbReference type="InterPro" id="IPR054350">
    <property type="entry name" value="PurT/PurK_preATP-grasp"/>
</dbReference>
<dbReference type="InterPro" id="IPR048740">
    <property type="entry name" value="PurT_C"/>
</dbReference>
<dbReference type="InterPro" id="IPR011054">
    <property type="entry name" value="Rudment_hybrid_motif"/>
</dbReference>
<dbReference type="NCBIfam" id="NF006766">
    <property type="entry name" value="PRK09288.1"/>
    <property type="match status" value="1"/>
</dbReference>
<dbReference type="NCBIfam" id="TIGR01142">
    <property type="entry name" value="purT"/>
    <property type="match status" value="1"/>
</dbReference>
<dbReference type="PANTHER" id="PTHR43055">
    <property type="entry name" value="FORMATE-DEPENDENT PHOSPHORIBOSYLGLYCINAMIDE FORMYLTRANSFERASE"/>
    <property type="match status" value="1"/>
</dbReference>
<dbReference type="PANTHER" id="PTHR43055:SF1">
    <property type="entry name" value="FORMATE-DEPENDENT PHOSPHORIBOSYLGLYCINAMIDE FORMYLTRANSFERASE"/>
    <property type="match status" value="1"/>
</dbReference>
<dbReference type="Pfam" id="PF02222">
    <property type="entry name" value="ATP-grasp"/>
    <property type="match status" value="1"/>
</dbReference>
<dbReference type="Pfam" id="PF21244">
    <property type="entry name" value="PurT_C"/>
    <property type="match status" value="1"/>
</dbReference>
<dbReference type="Pfam" id="PF22660">
    <property type="entry name" value="RS_preATP-grasp-like"/>
    <property type="match status" value="1"/>
</dbReference>
<dbReference type="SUPFAM" id="SSF56059">
    <property type="entry name" value="Glutathione synthetase ATP-binding domain-like"/>
    <property type="match status" value="1"/>
</dbReference>
<dbReference type="SUPFAM" id="SSF52440">
    <property type="entry name" value="PreATP-grasp domain"/>
    <property type="match status" value="1"/>
</dbReference>
<dbReference type="SUPFAM" id="SSF51246">
    <property type="entry name" value="Rudiment single hybrid motif"/>
    <property type="match status" value="1"/>
</dbReference>
<dbReference type="PROSITE" id="PS50975">
    <property type="entry name" value="ATP_GRASP"/>
    <property type="match status" value="1"/>
</dbReference>
<accession>Q3A5Q4</accession>
<feature type="chain" id="PRO_0000319193" description="Formate-dependent phosphoribosylglycinamide formyltransferase">
    <location>
        <begin position="1"/>
        <end position="393"/>
    </location>
</feature>
<feature type="domain" description="ATP-grasp" evidence="1">
    <location>
        <begin position="117"/>
        <end position="306"/>
    </location>
</feature>
<feature type="binding site" evidence="1">
    <location>
        <begin position="20"/>
        <end position="21"/>
    </location>
    <ligand>
        <name>N(1)-(5-phospho-beta-D-ribosyl)glycinamide</name>
        <dbReference type="ChEBI" id="CHEBI:143788"/>
    </ligand>
</feature>
<feature type="binding site" evidence="1">
    <location>
        <position position="80"/>
    </location>
    <ligand>
        <name>N(1)-(5-phospho-beta-D-ribosyl)glycinamide</name>
        <dbReference type="ChEBI" id="CHEBI:143788"/>
    </ligand>
</feature>
<feature type="binding site" evidence="1">
    <location>
        <position position="112"/>
    </location>
    <ligand>
        <name>ATP</name>
        <dbReference type="ChEBI" id="CHEBI:30616"/>
    </ligand>
</feature>
<feature type="binding site" evidence="1">
    <location>
        <position position="153"/>
    </location>
    <ligand>
        <name>ATP</name>
        <dbReference type="ChEBI" id="CHEBI:30616"/>
    </ligand>
</feature>
<feature type="binding site" evidence="1">
    <location>
        <begin position="158"/>
        <end position="163"/>
    </location>
    <ligand>
        <name>ATP</name>
        <dbReference type="ChEBI" id="CHEBI:30616"/>
    </ligand>
</feature>
<feature type="binding site" evidence="1">
    <location>
        <begin position="193"/>
        <end position="196"/>
    </location>
    <ligand>
        <name>ATP</name>
        <dbReference type="ChEBI" id="CHEBI:30616"/>
    </ligand>
</feature>
<feature type="binding site" evidence="1">
    <location>
        <position position="201"/>
    </location>
    <ligand>
        <name>ATP</name>
        <dbReference type="ChEBI" id="CHEBI:30616"/>
    </ligand>
</feature>
<feature type="binding site" evidence="1">
    <location>
        <position position="265"/>
    </location>
    <ligand>
        <name>Mg(2+)</name>
        <dbReference type="ChEBI" id="CHEBI:18420"/>
    </ligand>
</feature>
<feature type="binding site" evidence="1">
    <location>
        <position position="277"/>
    </location>
    <ligand>
        <name>Mg(2+)</name>
        <dbReference type="ChEBI" id="CHEBI:18420"/>
    </ligand>
</feature>
<feature type="binding site" evidence="1">
    <location>
        <position position="284"/>
    </location>
    <ligand>
        <name>N(1)-(5-phospho-beta-D-ribosyl)glycinamide</name>
        <dbReference type="ChEBI" id="CHEBI:143788"/>
    </ligand>
</feature>
<feature type="binding site" evidence="1">
    <location>
        <position position="354"/>
    </location>
    <ligand>
        <name>N(1)-(5-phospho-beta-D-ribosyl)glycinamide</name>
        <dbReference type="ChEBI" id="CHEBI:143788"/>
    </ligand>
</feature>
<feature type="binding site" evidence="1">
    <location>
        <begin position="361"/>
        <end position="362"/>
    </location>
    <ligand>
        <name>N(1)-(5-phospho-beta-D-ribosyl)glycinamide</name>
        <dbReference type="ChEBI" id="CHEBI:143788"/>
    </ligand>
</feature>
<reference key="1">
    <citation type="submission" date="2005-10" db="EMBL/GenBank/DDBJ databases">
        <title>Complete sequence of Pelobacter carbinolicus DSM 2380.</title>
        <authorList>
            <person name="Copeland A."/>
            <person name="Lucas S."/>
            <person name="Lapidus A."/>
            <person name="Barry K."/>
            <person name="Detter J.C."/>
            <person name="Glavina T."/>
            <person name="Hammon N."/>
            <person name="Israni S."/>
            <person name="Pitluck S."/>
            <person name="Chertkov O."/>
            <person name="Schmutz J."/>
            <person name="Larimer F."/>
            <person name="Land M."/>
            <person name="Kyrpides N."/>
            <person name="Ivanova N."/>
            <person name="Richardson P."/>
        </authorList>
    </citation>
    <scope>NUCLEOTIDE SEQUENCE [LARGE SCALE GENOMIC DNA]</scope>
    <source>
        <strain>DSM 2380 / NBRC 103641 / GraBd1</strain>
    </source>
</reference>
<gene>
    <name evidence="1" type="primary">purT</name>
    <name type="ordered locus">Pcar_1053</name>
</gene>
<protein>
    <recommendedName>
        <fullName evidence="1">Formate-dependent phosphoribosylglycinamide formyltransferase</fullName>
        <ecNumber evidence="1">6.3.1.21</ecNumber>
    </recommendedName>
    <alternativeName>
        <fullName evidence="1">5'-phosphoribosylglycinamide transformylase 2</fullName>
    </alternativeName>
    <alternativeName>
        <fullName evidence="1">Formate-dependent GAR transformylase</fullName>
    </alternativeName>
    <alternativeName>
        <fullName evidence="1">GAR transformylase 2</fullName>
        <shortName evidence="1">GART 2</shortName>
    </alternativeName>
    <alternativeName>
        <fullName evidence="1">Non-folate glycinamide ribonucleotide transformylase</fullName>
    </alternativeName>
    <alternativeName>
        <fullName evidence="1">Phosphoribosylglycinamide formyltransferase 2</fullName>
    </alternativeName>
</protein>